<feature type="chain" id="PRO_1000000492" description="Argininosuccinate lyase">
    <location>
        <begin position="1"/>
        <end position="460"/>
    </location>
</feature>
<organism>
    <name type="scientific">Lawsonia intracellularis (strain PHE/MN1-00)</name>
    <dbReference type="NCBI Taxonomy" id="363253"/>
    <lineage>
        <taxon>Bacteria</taxon>
        <taxon>Pseudomonadati</taxon>
        <taxon>Thermodesulfobacteriota</taxon>
        <taxon>Desulfovibrionia</taxon>
        <taxon>Desulfovibrionales</taxon>
        <taxon>Desulfovibrionaceae</taxon>
        <taxon>Lawsonia</taxon>
    </lineage>
</organism>
<name>ARLY_LAWIP</name>
<gene>
    <name evidence="1" type="primary">argH</name>
    <name type="ordered locus">LI0657</name>
</gene>
<sequence>MPKKKLWGGRFHEKTASPVEQYTQSISYDKKMYAQDIAGSKAHASMLGRQGILTSEEVLLLLNGLDSIQKEIETDTFPWKIELEDVHMNIESRLTDLIGTVGEKLHTGRSRNDQVALDFRLFVSDNISLWKRQLLELIGIFVAKAEEYKDTILPGFTHLQPAQPVSLAQHLLAYAWMFKRDVQRVYECNQRVRVSPLGAAALSGTTYNIDPFFIANELHMYGVFDNSMDAVSDRDFVIEALFCASVIMMHLSRFCEELIIWSNPAFGFVQLPDAYATGSSIMPQKKNPDVAEIMRGKVGRVYGALYNMLTILKALPLTYNRDLQEDKEPFFDTNTTIQSSLSIMADMLAAITFNKNKMASALSDGYLNATELADYLVTKGLSFREAHHTTGSIVALAEQQKIPLEELSLQDFQSICDKIESDVFHVLDYHVSIERRKSTGGTGYHSIEKQIEKLKSWLTQ</sequence>
<reference key="1">
    <citation type="submission" date="2005-11" db="EMBL/GenBank/DDBJ databases">
        <title>The complete genome sequence of Lawsonia intracellularis: the causative agent of proliferative enteropathy.</title>
        <authorList>
            <person name="Kaur K."/>
            <person name="Zhang Q."/>
            <person name="Beckler D."/>
            <person name="Munir S."/>
            <person name="Li L."/>
            <person name="Kinsley K."/>
            <person name="Herron L."/>
            <person name="Peterson A."/>
            <person name="May B."/>
            <person name="Singh S."/>
            <person name="Gebhart C."/>
            <person name="Kapur V."/>
        </authorList>
    </citation>
    <scope>NUCLEOTIDE SEQUENCE [LARGE SCALE GENOMIC DNA]</scope>
    <source>
        <strain>PHE/MN1-00</strain>
    </source>
</reference>
<evidence type="ECO:0000255" key="1">
    <source>
        <dbReference type="HAMAP-Rule" id="MF_00006"/>
    </source>
</evidence>
<proteinExistence type="inferred from homology"/>
<comment type="catalytic activity">
    <reaction evidence="1">
        <text>2-(N(omega)-L-arginino)succinate = fumarate + L-arginine</text>
        <dbReference type="Rhea" id="RHEA:24020"/>
        <dbReference type="ChEBI" id="CHEBI:29806"/>
        <dbReference type="ChEBI" id="CHEBI:32682"/>
        <dbReference type="ChEBI" id="CHEBI:57472"/>
        <dbReference type="EC" id="4.3.2.1"/>
    </reaction>
</comment>
<comment type="pathway">
    <text evidence="1">Amino-acid biosynthesis; L-arginine biosynthesis; L-arginine from L-ornithine and carbamoyl phosphate: step 3/3.</text>
</comment>
<comment type="subcellular location">
    <subcellularLocation>
        <location evidence="1">Cytoplasm</location>
    </subcellularLocation>
</comment>
<comment type="similarity">
    <text evidence="1">Belongs to the lyase 1 family. Argininosuccinate lyase subfamily.</text>
</comment>
<dbReference type="EC" id="4.3.2.1" evidence="1"/>
<dbReference type="EMBL" id="AM180252">
    <property type="protein sequence ID" value="CAJ54711.1"/>
    <property type="molecule type" value="Genomic_DNA"/>
</dbReference>
<dbReference type="RefSeq" id="WP_011526740.1">
    <property type="nucleotide sequence ID" value="NC_008011.1"/>
</dbReference>
<dbReference type="SMR" id="Q1MQL6"/>
<dbReference type="STRING" id="363253.LI0657"/>
<dbReference type="KEGG" id="lip:LI0657"/>
<dbReference type="eggNOG" id="COG0165">
    <property type="taxonomic scope" value="Bacteria"/>
</dbReference>
<dbReference type="HOGENOM" id="CLU_027272_2_3_7"/>
<dbReference type="OrthoDB" id="9769623at2"/>
<dbReference type="UniPathway" id="UPA00068">
    <property type="reaction ID" value="UER00114"/>
</dbReference>
<dbReference type="Proteomes" id="UP000002430">
    <property type="component" value="Chromosome"/>
</dbReference>
<dbReference type="GO" id="GO:0005829">
    <property type="term" value="C:cytosol"/>
    <property type="evidence" value="ECO:0007669"/>
    <property type="project" value="TreeGrafter"/>
</dbReference>
<dbReference type="GO" id="GO:0004056">
    <property type="term" value="F:argininosuccinate lyase activity"/>
    <property type="evidence" value="ECO:0007669"/>
    <property type="project" value="UniProtKB-UniRule"/>
</dbReference>
<dbReference type="GO" id="GO:0042450">
    <property type="term" value="P:arginine biosynthetic process via ornithine"/>
    <property type="evidence" value="ECO:0007669"/>
    <property type="project" value="InterPro"/>
</dbReference>
<dbReference type="GO" id="GO:0006526">
    <property type="term" value="P:L-arginine biosynthetic process"/>
    <property type="evidence" value="ECO:0007669"/>
    <property type="project" value="UniProtKB-UniRule"/>
</dbReference>
<dbReference type="CDD" id="cd01359">
    <property type="entry name" value="Argininosuccinate_lyase"/>
    <property type="match status" value="1"/>
</dbReference>
<dbReference type="FunFam" id="1.10.275.10:FF:000002">
    <property type="entry name" value="Argininosuccinate lyase"/>
    <property type="match status" value="1"/>
</dbReference>
<dbReference type="FunFam" id="1.10.40.30:FF:000001">
    <property type="entry name" value="Argininosuccinate lyase"/>
    <property type="match status" value="1"/>
</dbReference>
<dbReference type="FunFam" id="1.20.200.10:FF:000015">
    <property type="entry name" value="argininosuccinate lyase isoform X2"/>
    <property type="match status" value="1"/>
</dbReference>
<dbReference type="Gene3D" id="1.10.40.30">
    <property type="entry name" value="Fumarase/aspartase (C-terminal domain)"/>
    <property type="match status" value="1"/>
</dbReference>
<dbReference type="Gene3D" id="1.20.200.10">
    <property type="entry name" value="Fumarase/aspartase (Central domain)"/>
    <property type="match status" value="1"/>
</dbReference>
<dbReference type="Gene3D" id="1.10.275.10">
    <property type="entry name" value="Fumarase/aspartase (N-terminal domain)"/>
    <property type="match status" value="1"/>
</dbReference>
<dbReference type="HAMAP" id="MF_00006">
    <property type="entry name" value="Arg_succ_lyase"/>
    <property type="match status" value="1"/>
</dbReference>
<dbReference type="InterPro" id="IPR029419">
    <property type="entry name" value="Arg_succ_lyase_C"/>
</dbReference>
<dbReference type="InterPro" id="IPR009049">
    <property type="entry name" value="Argininosuccinate_lyase"/>
</dbReference>
<dbReference type="InterPro" id="IPR024083">
    <property type="entry name" value="Fumarase/histidase_N"/>
</dbReference>
<dbReference type="InterPro" id="IPR020557">
    <property type="entry name" value="Fumarate_lyase_CS"/>
</dbReference>
<dbReference type="InterPro" id="IPR000362">
    <property type="entry name" value="Fumarate_lyase_fam"/>
</dbReference>
<dbReference type="InterPro" id="IPR022761">
    <property type="entry name" value="Fumarate_lyase_N"/>
</dbReference>
<dbReference type="InterPro" id="IPR008948">
    <property type="entry name" value="L-Aspartase-like"/>
</dbReference>
<dbReference type="NCBIfam" id="TIGR00838">
    <property type="entry name" value="argH"/>
    <property type="match status" value="1"/>
</dbReference>
<dbReference type="PANTHER" id="PTHR43814">
    <property type="entry name" value="ARGININOSUCCINATE LYASE"/>
    <property type="match status" value="1"/>
</dbReference>
<dbReference type="PANTHER" id="PTHR43814:SF1">
    <property type="entry name" value="ARGININOSUCCINATE LYASE"/>
    <property type="match status" value="1"/>
</dbReference>
<dbReference type="Pfam" id="PF14698">
    <property type="entry name" value="ASL_C2"/>
    <property type="match status" value="1"/>
</dbReference>
<dbReference type="Pfam" id="PF00206">
    <property type="entry name" value="Lyase_1"/>
    <property type="match status" value="1"/>
</dbReference>
<dbReference type="PRINTS" id="PR00145">
    <property type="entry name" value="ARGSUCLYASE"/>
</dbReference>
<dbReference type="PRINTS" id="PR00149">
    <property type="entry name" value="FUMRATELYASE"/>
</dbReference>
<dbReference type="SUPFAM" id="SSF48557">
    <property type="entry name" value="L-aspartase-like"/>
    <property type="match status" value="1"/>
</dbReference>
<dbReference type="PROSITE" id="PS00163">
    <property type="entry name" value="FUMARATE_LYASES"/>
    <property type="match status" value="1"/>
</dbReference>
<keyword id="KW-0028">Amino-acid biosynthesis</keyword>
<keyword id="KW-0055">Arginine biosynthesis</keyword>
<keyword id="KW-0963">Cytoplasm</keyword>
<keyword id="KW-0456">Lyase</keyword>
<keyword id="KW-1185">Reference proteome</keyword>
<accession>Q1MQL6</accession>
<protein>
    <recommendedName>
        <fullName evidence="1">Argininosuccinate lyase</fullName>
        <shortName evidence="1">ASAL</shortName>
        <ecNumber evidence="1">4.3.2.1</ecNumber>
    </recommendedName>
    <alternativeName>
        <fullName evidence="1">Arginosuccinase</fullName>
    </alternativeName>
</protein>